<accession>B8D0Z5</accession>
<gene>
    <name evidence="1" type="primary">guaA</name>
    <name type="ordered locus">Hore_02020</name>
</gene>
<evidence type="ECO:0000255" key="1">
    <source>
        <dbReference type="HAMAP-Rule" id="MF_00344"/>
    </source>
</evidence>
<proteinExistence type="inferred from homology"/>
<name>GUAA_HALOH</name>
<comment type="function">
    <text evidence="1">Catalyzes the synthesis of GMP from XMP.</text>
</comment>
<comment type="catalytic activity">
    <reaction evidence="1">
        <text>XMP + L-glutamine + ATP + H2O = GMP + L-glutamate + AMP + diphosphate + 2 H(+)</text>
        <dbReference type="Rhea" id="RHEA:11680"/>
        <dbReference type="ChEBI" id="CHEBI:15377"/>
        <dbReference type="ChEBI" id="CHEBI:15378"/>
        <dbReference type="ChEBI" id="CHEBI:29985"/>
        <dbReference type="ChEBI" id="CHEBI:30616"/>
        <dbReference type="ChEBI" id="CHEBI:33019"/>
        <dbReference type="ChEBI" id="CHEBI:57464"/>
        <dbReference type="ChEBI" id="CHEBI:58115"/>
        <dbReference type="ChEBI" id="CHEBI:58359"/>
        <dbReference type="ChEBI" id="CHEBI:456215"/>
        <dbReference type="EC" id="6.3.5.2"/>
    </reaction>
</comment>
<comment type="pathway">
    <text evidence="1">Purine metabolism; GMP biosynthesis; GMP from XMP (L-Gln route): step 1/1.</text>
</comment>
<comment type="subunit">
    <text evidence="1">Homodimer.</text>
</comment>
<dbReference type="EC" id="6.3.5.2" evidence="1"/>
<dbReference type="EMBL" id="CP001098">
    <property type="protein sequence ID" value="ACL68964.1"/>
    <property type="molecule type" value="Genomic_DNA"/>
</dbReference>
<dbReference type="RefSeq" id="WP_012635162.1">
    <property type="nucleotide sequence ID" value="NC_011899.1"/>
</dbReference>
<dbReference type="SMR" id="B8D0Z5"/>
<dbReference type="STRING" id="373903.Hore_02020"/>
<dbReference type="MEROPS" id="C26.957"/>
<dbReference type="KEGG" id="hor:Hore_02020"/>
<dbReference type="eggNOG" id="COG0518">
    <property type="taxonomic scope" value="Bacteria"/>
</dbReference>
<dbReference type="eggNOG" id="COG0519">
    <property type="taxonomic scope" value="Bacteria"/>
</dbReference>
<dbReference type="HOGENOM" id="CLU_014340_0_5_9"/>
<dbReference type="OrthoDB" id="9802219at2"/>
<dbReference type="UniPathway" id="UPA00189">
    <property type="reaction ID" value="UER00296"/>
</dbReference>
<dbReference type="Proteomes" id="UP000000719">
    <property type="component" value="Chromosome"/>
</dbReference>
<dbReference type="GO" id="GO:0005829">
    <property type="term" value="C:cytosol"/>
    <property type="evidence" value="ECO:0007669"/>
    <property type="project" value="TreeGrafter"/>
</dbReference>
<dbReference type="GO" id="GO:0005524">
    <property type="term" value="F:ATP binding"/>
    <property type="evidence" value="ECO:0007669"/>
    <property type="project" value="UniProtKB-UniRule"/>
</dbReference>
<dbReference type="GO" id="GO:0003921">
    <property type="term" value="F:GMP synthase activity"/>
    <property type="evidence" value="ECO:0007669"/>
    <property type="project" value="InterPro"/>
</dbReference>
<dbReference type="CDD" id="cd01742">
    <property type="entry name" value="GATase1_GMP_Synthase"/>
    <property type="match status" value="1"/>
</dbReference>
<dbReference type="CDD" id="cd01997">
    <property type="entry name" value="GMP_synthase_C"/>
    <property type="match status" value="1"/>
</dbReference>
<dbReference type="FunFam" id="3.30.300.10:FF:000002">
    <property type="entry name" value="GMP synthase [glutamine-hydrolyzing]"/>
    <property type="match status" value="1"/>
</dbReference>
<dbReference type="FunFam" id="3.40.50.620:FF:000001">
    <property type="entry name" value="GMP synthase [glutamine-hydrolyzing]"/>
    <property type="match status" value="1"/>
</dbReference>
<dbReference type="FunFam" id="3.40.50.880:FF:000001">
    <property type="entry name" value="GMP synthase [glutamine-hydrolyzing]"/>
    <property type="match status" value="1"/>
</dbReference>
<dbReference type="Gene3D" id="3.30.300.10">
    <property type="match status" value="1"/>
</dbReference>
<dbReference type="Gene3D" id="3.40.50.880">
    <property type="match status" value="1"/>
</dbReference>
<dbReference type="Gene3D" id="3.40.50.620">
    <property type="entry name" value="HUPs"/>
    <property type="match status" value="1"/>
</dbReference>
<dbReference type="HAMAP" id="MF_00344">
    <property type="entry name" value="GMP_synthase"/>
    <property type="match status" value="1"/>
</dbReference>
<dbReference type="InterPro" id="IPR029062">
    <property type="entry name" value="Class_I_gatase-like"/>
</dbReference>
<dbReference type="InterPro" id="IPR017926">
    <property type="entry name" value="GATASE"/>
</dbReference>
<dbReference type="InterPro" id="IPR001674">
    <property type="entry name" value="GMP_synth_C"/>
</dbReference>
<dbReference type="InterPro" id="IPR004739">
    <property type="entry name" value="GMP_synth_GATase"/>
</dbReference>
<dbReference type="InterPro" id="IPR022955">
    <property type="entry name" value="GMP_synthase"/>
</dbReference>
<dbReference type="InterPro" id="IPR025777">
    <property type="entry name" value="GMPS_ATP_PPase_dom"/>
</dbReference>
<dbReference type="InterPro" id="IPR022310">
    <property type="entry name" value="NAD/GMP_synthase"/>
</dbReference>
<dbReference type="InterPro" id="IPR014729">
    <property type="entry name" value="Rossmann-like_a/b/a_fold"/>
</dbReference>
<dbReference type="NCBIfam" id="TIGR00884">
    <property type="entry name" value="guaA_Cterm"/>
    <property type="match status" value="1"/>
</dbReference>
<dbReference type="NCBIfam" id="TIGR00888">
    <property type="entry name" value="guaA_Nterm"/>
    <property type="match status" value="1"/>
</dbReference>
<dbReference type="NCBIfam" id="NF000848">
    <property type="entry name" value="PRK00074.1"/>
    <property type="match status" value="1"/>
</dbReference>
<dbReference type="PANTHER" id="PTHR11922:SF2">
    <property type="entry name" value="GMP SYNTHASE [GLUTAMINE-HYDROLYZING]"/>
    <property type="match status" value="1"/>
</dbReference>
<dbReference type="PANTHER" id="PTHR11922">
    <property type="entry name" value="GMP SYNTHASE-RELATED"/>
    <property type="match status" value="1"/>
</dbReference>
<dbReference type="Pfam" id="PF00117">
    <property type="entry name" value="GATase"/>
    <property type="match status" value="1"/>
</dbReference>
<dbReference type="Pfam" id="PF00958">
    <property type="entry name" value="GMP_synt_C"/>
    <property type="match status" value="1"/>
</dbReference>
<dbReference type="Pfam" id="PF02540">
    <property type="entry name" value="NAD_synthase"/>
    <property type="match status" value="1"/>
</dbReference>
<dbReference type="PRINTS" id="PR00097">
    <property type="entry name" value="ANTSNTHASEII"/>
</dbReference>
<dbReference type="PRINTS" id="PR00096">
    <property type="entry name" value="GATASE"/>
</dbReference>
<dbReference type="SUPFAM" id="SSF52402">
    <property type="entry name" value="Adenine nucleotide alpha hydrolases-like"/>
    <property type="match status" value="1"/>
</dbReference>
<dbReference type="SUPFAM" id="SSF52317">
    <property type="entry name" value="Class I glutamine amidotransferase-like"/>
    <property type="match status" value="1"/>
</dbReference>
<dbReference type="SUPFAM" id="SSF54810">
    <property type="entry name" value="GMP synthetase C-terminal dimerisation domain"/>
    <property type="match status" value="1"/>
</dbReference>
<dbReference type="PROSITE" id="PS51273">
    <property type="entry name" value="GATASE_TYPE_1"/>
    <property type="match status" value="1"/>
</dbReference>
<dbReference type="PROSITE" id="PS51553">
    <property type="entry name" value="GMPS_ATP_PPASE"/>
    <property type="match status" value="1"/>
</dbReference>
<keyword id="KW-0067">ATP-binding</keyword>
<keyword id="KW-0315">Glutamine amidotransferase</keyword>
<keyword id="KW-0332">GMP biosynthesis</keyword>
<keyword id="KW-0436">Ligase</keyword>
<keyword id="KW-0547">Nucleotide-binding</keyword>
<keyword id="KW-0658">Purine biosynthesis</keyword>
<keyword id="KW-1185">Reference proteome</keyword>
<reference key="1">
    <citation type="journal article" date="2009" name="PLoS ONE">
        <title>Genome analysis of the anaerobic thermohalophilic bacterium Halothermothrix orenii.</title>
        <authorList>
            <person name="Mavromatis K."/>
            <person name="Ivanova N."/>
            <person name="Anderson I."/>
            <person name="Lykidis A."/>
            <person name="Hooper S.D."/>
            <person name="Sun H."/>
            <person name="Kunin V."/>
            <person name="Lapidus A."/>
            <person name="Hugenholtz P."/>
            <person name="Patel B."/>
            <person name="Kyrpides N.C."/>
        </authorList>
    </citation>
    <scope>NUCLEOTIDE SEQUENCE [LARGE SCALE GENOMIC DNA]</scope>
    <source>
        <strain>H 168 / OCM 544 / DSM 9562</strain>
    </source>
</reference>
<feature type="chain" id="PRO_1000190243" description="GMP synthase [glutamine-hydrolyzing]">
    <location>
        <begin position="1"/>
        <end position="510"/>
    </location>
</feature>
<feature type="domain" description="Glutamine amidotransferase type-1" evidence="1">
    <location>
        <begin position="5"/>
        <end position="195"/>
    </location>
</feature>
<feature type="domain" description="GMPS ATP-PPase" evidence="1">
    <location>
        <begin position="196"/>
        <end position="385"/>
    </location>
</feature>
<feature type="active site" description="Nucleophile" evidence="1">
    <location>
        <position position="82"/>
    </location>
</feature>
<feature type="active site" evidence="1">
    <location>
        <position position="169"/>
    </location>
</feature>
<feature type="active site" evidence="1">
    <location>
        <position position="171"/>
    </location>
</feature>
<feature type="binding site" evidence="1">
    <location>
        <begin position="223"/>
        <end position="229"/>
    </location>
    <ligand>
        <name>ATP</name>
        <dbReference type="ChEBI" id="CHEBI:30616"/>
    </ligand>
</feature>
<organism>
    <name type="scientific">Halothermothrix orenii (strain H 168 / OCM 544 / DSM 9562)</name>
    <dbReference type="NCBI Taxonomy" id="373903"/>
    <lineage>
        <taxon>Bacteria</taxon>
        <taxon>Bacillati</taxon>
        <taxon>Bacillota</taxon>
        <taxon>Clostridia</taxon>
        <taxon>Halanaerobiales</taxon>
        <taxon>Halothermotrichaceae</taxon>
        <taxon>Halothermothrix</taxon>
    </lineage>
</organism>
<sequence>MKEDKILVLDFGGQYSQLIARRVRECNVYSIIKPYNISIDQIKDINPAGIIFSGGPKSVTGPEAPMIDKEVFKLNIPILGICYGMQLMTALLPGGAVEKARHGEYGKARLHITEKDKLFEGISDSQVWMSHWDRVKKVPDGFKVTAKTDITPVAAMGNPELKFYGVQFHPEVVHTIQGLNIIRNYLFKVCGVKGTWNMADFINEEIDRIKEEVGSSQVISGLSGGVDSAVASTMVHRAIGDQLTCIFVDHGLLRKGEAEQVKRTFVDEFNIPLVYVDARERFLNRLNGVKDPETKRKIIGEEFIRVFEEEARKLGDARYLVQGTLYSDVIESGSETAETIKSHHNVGGLPDNMDFKLIEPLRNLFKDEVRKIGEVLGLPDEIVWRQPFPGPGLAIRIIGEIDGKKLEILRKADSIIQEEIKEAGYYKEIWQSFAVLPDLKSVGVMGDTRTYGYPIILRAVTSDDAMTADWARLPYELLEKISTRIVNEVDSVNRVVYDITSKPPATIEWE</sequence>
<protein>
    <recommendedName>
        <fullName evidence="1">GMP synthase [glutamine-hydrolyzing]</fullName>
        <ecNumber evidence="1">6.3.5.2</ecNumber>
    </recommendedName>
    <alternativeName>
        <fullName evidence="1">GMP synthetase</fullName>
    </alternativeName>
    <alternativeName>
        <fullName evidence="1">Glutamine amidotransferase</fullName>
    </alternativeName>
</protein>